<organism>
    <name type="scientific">Clostridium botulinum (strain Loch Maree / Type A3)</name>
    <dbReference type="NCBI Taxonomy" id="498214"/>
    <lineage>
        <taxon>Bacteria</taxon>
        <taxon>Bacillati</taxon>
        <taxon>Bacillota</taxon>
        <taxon>Clostridia</taxon>
        <taxon>Eubacteriales</taxon>
        <taxon>Clostridiaceae</taxon>
        <taxon>Clostridium</taxon>
    </lineage>
</organism>
<comment type="function">
    <text evidence="1">Probably functions as a manganese efflux pump.</text>
</comment>
<comment type="subcellular location">
    <subcellularLocation>
        <location evidence="1">Cell membrane</location>
        <topology evidence="1">Multi-pass membrane protein</topology>
    </subcellularLocation>
</comment>
<comment type="similarity">
    <text evidence="1">Belongs to the MntP (TC 9.B.29) family.</text>
</comment>
<sequence length="201" mass="21732">MDLVSIILISIGLSMDAFAVSITNGAMISKVTASEGIRIGLFFGGFQALMPLIGWSIGIKFESYIAALDHWIALILLSIIGGKMIYDSIKENRDNKDEIACDYAVGEKKCLNNKTLTLLAIATSIDALAIGVSFAFLKVSIINTIIIIGSITFVICFIGVMIGKKCGKLLKKRAEILGGIVLIFIGIKIFIEHTNILSKIF</sequence>
<accession>B1L008</accession>
<name>MNTP_CLOBM</name>
<gene>
    <name evidence="1" type="primary">mntP</name>
    <name type="ordered locus">CLK_0733</name>
</gene>
<dbReference type="EMBL" id="CP000962">
    <property type="protein sequence ID" value="ACA53926.1"/>
    <property type="molecule type" value="Genomic_DNA"/>
</dbReference>
<dbReference type="RefSeq" id="WP_012342099.1">
    <property type="nucleotide sequence ID" value="NC_010520.1"/>
</dbReference>
<dbReference type="KEGG" id="cbl:CLK_0733"/>
<dbReference type="HOGENOM" id="CLU_096410_3_0_9"/>
<dbReference type="GO" id="GO:0005886">
    <property type="term" value="C:plasma membrane"/>
    <property type="evidence" value="ECO:0007669"/>
    <property type="project" value="UniProtKB-SubCell"/>
</dbReference>
<dbReference type="GO" id="GO:0005384">
    <property type="term" value="F:manganese ion transmembrane transporter activity"/>
    <property type="evidence" value="ECO:0007669"/>
    <property type="project" value="UniProtKB-UniRule"/>
</dbReference>
<dbReference type="HAMAP" id="MF_01521">
    <property type="entry name" value="MntP_pump"/>
    <property type="match status" value="1"/>
</dbReference>
<dbReference type="InterPro" id="IPR003810">
    <property type="entry name" value="Mntp/YtaF"/>
</dbReference>
<dbReference type="InterPro" id="IPR022929">
    <property type="entry name" value="Put_MntP"/>
</dbReference>
<dbReference type="PANTHER" id="PTHR35529">
    <property type="entry name" value="MANGANESE EFFLUX PUMP MNTP-RELATED"/>
    <property type="match status" value="1"/>
</dbReference>
<dbReference type="PANTHER" id="PTHR35529:SF1">
    <property type="entry name" value="MANGANESE EFFLUX PUMP MNTP-RELATED"/>
    <property type="match status" value="1"/>
</dbReference>
<dbReference type="Pfam" id="PF02659">
    <property type="entry name" value="Mntp"/>
    <property type="match status" value="1"/>
</dbReference>
<feature type="chain" id="PRO_1000200016" description="Putative manganese efflux pump MntP">
    <location>
        <begin position="1"/>
        <end position="201"/>
    </location>
</feature>
<feature type="transmembrane region" description="Helical" evidence="1">
    <location>
        <begin position="3"/>
        <end position="23"/>
    </location>
</feature>
<feature type="transmembrane region" description="Helical" evidence="1">
    <location>
        <begin position="39"/>
        <end position="59"/>
    </location>
</feature>
<feature type="transmembrane region" description="Helical" evidence="1">
    <location>
        <begin position="65"/>
        <end position="85"/>
    </location>
</feature>
<feature type="transmembrane region" description="Helical" evidence="1">
    <location>
        <begin position="116"/>
        <end position="136"/>
    </location>
</feature>
<feature type="transmembrane region" description="Helical" evidence="1">
    <location>
        <begin position="141"/>
        <end position="161"/>
    </location>
</feature>
<feature type="transmembrane region" description="Helical" evidence="1">
    <location>
        <begin position="176"/>
        <end position="196"/>
    </location>
</feature>
<keyword id="KW-1003">Cell membrane</keyword>
<keyword id="KW-0406">Ion transport</keyword>
<keyword id="KW-0464">Manganese</keyword>
<keyword id="KW-0472">Membrane</keyword>
<keyword id="KW-0812">Transmembrane</keyword>
<keyword id="KW-1133">Transmembrane helix</keyword>
<keyword id="KW-0813">Transport</keyword>
<evidence type="ECO:0000255" key="1">
    <source>
        <dbReference type="HAMAP-Rule" id="MF_01521"/>
    </source>
</evidence>
<protein>
    <recommendedName>
        <fullName evidence="1">Putative manganese efflux pump MntP</fullName>
    </recommendedName>
</protein>
<proteinExistence type="inferred from homology"/>
<reference key="1">
    <citation type="journal article" date="2007" name="PLoS ONE">
        <title>Analysis of the neurotoxin complex genes in Clostridium botulinum A1-A4 and B1 strains: BoNT/A3, /Ba4 and /B1 clusters are located within plasmids.</title>
        <authorList>
            <person name="Smith T.J."/>
            <person name="Hill K.K."/>
            <person name="Foley B.T."/>
            <person name="Detter J.C."/>
            <person name="Munk A.C."/>
            <person name="Bruce D.C."/>
            <person name="Doggett N.A."/>
            <person name="Smith L.A."/>
            <person name="Marks J.D."/>
            <person name="Xie G."/>
            <person name="Brettin T.S."/>
        </authorList>
    </citation>
    <scope>NUCLEOTIDE SEQUENCE [LARGE SCALE GENOMIC DNA]</scope>
    <source>
        <strain>Loch Maree / Type A3</strain>
    </source>
</reference>